<keyword id="KW-0256">Endoplasmic reticulum</keyword>
<keyword id="KW-0325">Glycoprotein</keyword>
<keyword id="KW-0472">Membrane</keyword>
<keyword id="KW-1185">Reference proteome</keyword>
<keyword id="KW-0732">Signal</keyword>
<keyword id="KW-0812">Transmembrane</keyword>
<keyword id="KW-1133">Transmembrane helix</keyword>
<sequence length="256" mass="28908">MWSKKFTLKKLILGGYLFAQKVYCEDESNSIYGTWSSKSNQVFTGPGFYDPVDELLIEPSLPGLSYSFTEDGWYEEATYQVSGNPRNPTCPMASLIYQHGTYNISENGTLVLNPIEVDGRQLFSDPCNDDGVSTYSRYNQTETFKEYAVGIDPYHGIYTLQLYQYDGTPMQPLYLAYRPPMMLPTETLNPTSSATSTDDPSSNKKRSLRSLVRRSLENRHKTNAIKRQNTSFLTSNAIWYISAGMLGVGSLLFLAF</sequence>
<organism>
    <name type="scientific">Saccharomyces cerevisiae (strain ATCC 204508 / S288c)</name>
    <name type="common">Baker's yeast</name>
    <dbReference type="NCBI Taxonomy" id="559292"/>
    <lineage>
        <taxon>Eukaryota</taxon>
        <taxon>Fungi</taxon>
        <taxon>Dikarya</taxon>
        <taxon>Ascomycota</taxon>
        <taxon>Saccharomycotina</taxon>
        <taxon>Saccharomycetes</taxon>
        <taxon>Saccharomycetales</taxon>
        <taxon>Saccharomycetaceae</taxon>
        <taxon>Saccharomyces</taxon>
    </lineage>
</organism>
<evidence type="ECO:0000255" key="1"/>
<evidence type="ECO:0000256" key="2">
    <source>
        <dbReference type="SAM" id="MobiDB-lite"/>
    </source>
</evidence>
<evidence type="ECO:0000269" key="3">
    <source>
    </source>
</evidence>
<evidence type="ECO:0000269" key="4">
    <source>
    </source>
</evidence>
<evidence type="ECO:0000269" key="5">
    <source>
    </source>
</evidence>
<evidence type="ECO:0000269" key="6">
    <source>
    </source>
</evidence>
<evidence type="ECO:0000269" key="7">
    <source>
    </source>
</evidence>
<evidence type="ECO:0000269" key="8">
    <source>
    </source>
</evidence>
<evidence type="ECO:0000269" key="9">
    <source>
    </source>
</evidence>
<evidence type="ECO:0000269" key="10">
    <source>
    </source>
</evidence>
<evidence type="ECO:0000269" key="11">
    <source>
    </source>
</evidence>
<evidence type="ECO:0000305" key="12"/>
<evidence type="ECO:0000305" key="13">
    <source>
    </source>
</evidence>
<evidence type="ECO:0000305" key="14">
    <source>
    </source>
</evidence>
<evidence type="ECO:0000305" key="15">
    <source>
    </source>
</evidence>
<reference key="1">
    <citation type="journal article" date="1997" name="Nature">
        <title>The nucleotide sequence of Saccharomyces cerevisiae chromosome XIII.</title>
        <authorList>
            <person name="Bowman S."/>
            <person name="Churcher C.M."/>
            <person name="Badcock K."/>
            <person name="Brown D."/>
            <person name="Chillingworth T."/>
            <person name="Connor R."/>
            <person name="Dedman K."/>
            <person name="Devlin K."/>
            <person name="Gentles S."/>
            <person name="Hamlin N."/>
            <person name="Hunt S."/>
            <person name="Jagels K."/>
            <person name="Lye G."/>
            <person name="Moule S."/>
            <person name="Odell C."/>
            <person name="Pearson D."/>
            <person name="Rajandream M.A."/>
            <person name="Rice P."/>
            <person name="Skelton J."/>
            <person name="Walsh S.V."/>
            <person name="Whitehead S."/>
            <person name="Barrell B.G."/>
        </authorList>
    </citation>
    <scope>NUCLEOTIDE SEQUENCE [LARGE SCALE GENOMIC DNA]</scope>
    <source>
        <strain>ATCC 204508 / S288c</strain>
    </source>
</reference>
<reference key="2">
    <citation type="journal article" date="2014" name="G3 (Bethesda)">
        <title>The reference genome sequence of Saccharomyces cerevisiae: Then and now.</title>
        <authorList>
            <person name="Engel S.R."/>
            <person name="Dietrich F.S."/>
            <person name="Fisk D.G."/>
            <person name="Binkley G."/>
            <person name="Balakrishnan R."/>
            <person name="Costanzo M.C."/>
            <person name="Dwight S.S."/>
            <person name="Hitz B.C."/>
            <person name="Karra K."/>
            <person name="Nash R.S."/>
            <person name="Weng S."/>
            <person name="Wong E.D."/>
            <person name="Lloyd P."/>
            <person name="Skrzypek M.S."/>
            <person name="Miyasato S.R."/>
            <person name="Simison M."/>
            <person name="Cherry J.M."/>
        </authorList>
    </citation>
    <scope>GENOME REANNOTATION</scope>
    <source>
        <strain>ATCC 204508 / S288c</strain>
    </source>
</reference>
<reference key="3">
    <citation type="journal article" date="1997" name="Cell">
        <title>The yeast phosphatidylinositol kinase homolog TOR2 activates RHO1 and RHO2 via the exchange factor ROM2.</title>
        <authorList>
            <person name="Schmidt A."/>
            <person name="Bickle M."/>
            <person name="Beck T."/>
            <person name="Hall M.N."/>
        </authorList>
    </citation>
    <scope>FUNCTION</scope>
</reference>
<reference key="4">
    <citation type="journal article" date="1998" name="EMBO J.">
        <title>Cell wall integrity modulates RHO1 activity via the exchange factor ROM2.</title>
        <authorList>
            <person name="Bickle M."/>
            <person name="Delley P.-A."/>
            <person name="Schmidt A."/>
            <person name="Hall M.N."/>
        </authorList>
    </citation>
    <scope>FUNCTION</scope>
</reference>
<reference key="5">
    <citation type="journal article" date="2003" name="Nature">
        <title>Global analysis of protein localization in budding yeast.</title>
        <authorList>
            <person name="Huh W.-K."/>
            <person name="Falvo J.V."/>
            <person name="Gerke L.C."/>
            <person name="Carroll A.S."/>
            <person name="Howson R.W."/>
            <person name="Weissman J.S."/>
            <person name="O'Shea E.K."/>
        </authorList>
    </citation>
    <scope>SUBCELLULAR LOCATION [LARGE SCALE ANALYSIS]</scope>
</reference>
<reference key="6">
    <citation type="journal article" date="2003" name="Nature">
        <title>Global analysis of protein expression in yeast.</title>
        <authorList>
            <person name="Ghaemmaghami S."/>
            <person name="Huh W.-K."/>
            <person name="Bower K."/>
            <person name="Howson R.W."/>
            <person name="Belle A."/>
            <person name="Dephoure N."/>
            <person name="O'Shea E.K."/>
            <person name="Weissman J.S."/>
        </authorList>
    </citation>
    <scope>LEVEL OF PROTEIN EXPRESSION [LARGE SCALE ANALYSIS]</scope>
</reference>
<reference key="7">
    <citation type="journal article" date="2004" name="Microbiology">
        <title>Rot1p of Saccharomyces cerevisiae is a putative membrane protein required for normal levels of the cell wall 1,6-beta-glucan.</title>
        <authorList>
            <person name="Machi K."/>
            <person name="Azuma M."/>
            <person name="Igarashi K."/>
            <person name="Matsumoto T."/>
            <person name="Fukuda H."/>
            <person name="Kondo A."/>
            <person name="Ooshima H."/>
        </authorList>
    </citation>
    <scope>FUNCTION</scope>
</reference>
<reference key="8">
    <citation type="journal article" date="2006" name="Autophagy">
        <title>Causal links between protein folding in the ER and events along the secretory pathway.</title>
        <authorList>
            <person name="Takeuchi M."/>
            <person name="Kimata Y."/>
            <person name="Kohno K."/>
        </authorList>
    </citation>
    <scope>FUNCTION</scope>
</reference>
<reference key="9">
    <citation type="journal article" date="2006" name="J. Biochem.">
        <title>Saccharomyces cerevisiae Rot1p is an ER-localized membrane protein that may function with BiP/Kar2p in protein folding.</title>
        <authorList>
            <person name="Takeuchi M."/>
            <person name="Kimata Y."/>
            <person name="Hirata A."/>
            <person name="Oka M."/>
            <person name="Kohno K."/>
        </authorList>
    </citation>
    <scope>FUNCTION</scope>
    <scope>SUBCELLULAR LOCATION</scope>
</reference>
<reference key="10">
    <citation type="journal article" date="2007" name="J. Cell Sci.">
        <title>Rot1 plays an antagonistic role to Clb2 in actin cytoskeleton dynamics throughout the cell cycle.</title>
        <authorList>
            <person name="Juanes M.A."/>
            <person name="Queralt E."/>
            <person name="Bano M.C."/>
            <person name="Igual J.C."/>
        </authorList>
    </citation>
    <scope>FUNCTION</scope>
</reference>
<reference key="11">
    <citation type="journal article" date="2007" name="Yeast">
        <title>Dissecting the role of dolichol in cell wall assembly in the yeast mutants impaired in early glycosylation reactions.</title>
        <authorList>
            <person name="Orlowski J."/>
            <person name="Machula K."/>
            <person name="Janik A."/>
            <person name="Zdebska E."/>
            <person name="Palamarczyk G."/>
        </authorList>
    </citation>
    <scope>FUNCTION</scope>
</reference>
<reference key="12">
    <citation type="journal article" date="2008" name="Yeast">
        <title>Membrane topology and post-translational modification of the Saccharomyces cerevisiae essential protein Rot1.</title>
        <authorList>
            <person name="Angeles Juanes M."/>
            <person name="Carlos Igual J."/>
            <person name="Carmen Bano M."/>
        </authorList>
    </citation>
    <scope>FUNCTION</scope>
    <scope>SUBCELLULAR LOCATION</scope>
    <scope>TOPOLOGY</scope>
    <scope>GLYCOSYLATION</scope>
</reference>
<feature type="signal peptide" evidence="1">
    <location>
        <begin position="1"/>
        <end position="24"/>
    </location>
</feature>
<feature type="chain" id="PRO_0000203327" description="Protein ROT1">
    <location>
        <begin position="25"/>
        <end position="256"/>
    </location>
</feature>
<feature type="topological domain" description="Lumenal" evidence="1">
    <location>
        <begin position="25"/>
        <end position="235"/>
    </location>
</feature>
<feature type="transmembrane region" description="Helical" evidence="1">
    <location>
        <begin position="236"/>
        <end position="256"/>
    </location>
</feature>
<feature type="region of interest" description="Disordered" evidence="2">
    <location>
        <begin position="186"/>
        <end position="209"/>
    </location>
</feature>
<feature type="compositionally biased region" description="Low complexity" evidence="2">
    <location>
        <begin position="190"/>
        <end position="200"/>
    </location>
</feature>
<feature type="glycosylation site" description="N-linked (GlcNAc...) asparagine" evidence="9">
    <location>
        <position position="103"/>
    </location>
</feature>
<feature type="glycosylation site" description="N-linked (GlcNAc...) asparagine" evidence="9">
    <location>
        <position position="107"/>
    </location>
</feature>
<feature type="glycosylation site" description="N-linked (GlcNAc...) asparagine" evidence="9">
    <location>
        <position position="139"/>
    </location>
</feature>
<protein>
    <recommendedName>
        <fullName>Protein ROT1</fullName>
    </recommendedName>
    <alternativeName>
        <fullName>Reversal of TOR2 lethality protein 1</fullName>
    </alternativeName>
</protein>
<gene>
    <name type="primary">ROT1</name>
    <name type="ordered locus">YMR200W</name>
    <name type="ORF">YM8325.01</name>
</gene>
<comment type="function">
    <text evidence="4 5 6 7 8 9 10 11">Required for normal levels of the cell wall 1,6-beta-glucan. Involved in a protein folding machinery chaperoning proteins acting in various physiological processes including cell wall synthesis and lysis of autophagic bodies. Controls actin cytoskeleton polarization to the mother-bud neck and CLB2 protein stability.</text>
</comment>
<comment type="subcellular location">
    <subcellularLocation>
        <location evidence="13 14 15">Endoplasmic reticulum membrane</location>
        <topology evidence="13 14 15">Single-pass type I membrane protein</topology>
    </subcellularLocation>
</comment>
<comment type="PTM">
    <text evidence="9">N-glycosylated.</text>
</comment>
<comment type="miscellaneous">
    <text evidence="3">Present with 2360 molecules/cell in log phase SD medium.</text>
</comment>
<comment type="similarity">
    <text evidence="12">Belongs to the ROT1 family.</text>
</comment>
<dbReference type="EMBL" id="Z48755">
    <property type="protein sequence ID" value="CAA88641.1"/>
    <property type="molecule type" value="Genomic_DNA"/>
</dbReference>
<dbReference type="EMBL" id="BK006946">
    <property type="protein sequence ID" value="DAA10099.1"/>
    <property type="molecule type" value="Genomic_DNA"/>
</dbReference>
<dbReference type="PIR" id="S59441">
    <property type="entry name" value="S59441"/>
</dbReference>
<dbReference type="RefSeq" id="NP_013927.1">
    <property type="nucleotide sequence ID" value="NM_001182707.1"/>
</dbReference>
<dbReference type="BioGRID" id="35378">
    <property type="interactions" value="301"/>
</dbReference>
<dbReference type="DIP" id="DIP-2676N"/>
<dbReference type="FunCoup" id="Q03691">
    <property type="interactions" value="48"/>
</dbReference>
<dbReference type="IntAct" id="Q03691">
    <property type="interactions" value="2"/>
</dbReference>
<dbReference type="MINT" id="Q03691"/>
<dbReference type="STRING" id="4932.YMR200W"/>
<dbReference type="GlyCosmos" id="Q03691">
    <property type="glycosylation" value="3 sites, No reported glycans"/>
</dbReference>
<dbReference type="GlyGen" id="Q03691">
    <property type="glycosylation" value="3 sites"/>
</dbReference>
<dbReference type="iPTMnet" id="Q03691"/>
<dbReference type="PaxDb" id="4932-YMR200W"/>
<dbReference type="PeptideAtlas" id="Q03691"/>
<dbReference type="EnsemblFungi" id="YMR200W_mRNA">
    <property type="protein sequence ID" value="YMR200W"/>
    <property type="gene ID" value="YMR200W"/>
</dbReference>
<dbReference type="GeneID" id="855240"/>
<dbReference type="KEGG" id="sce:YMR200W"/>
<dbReference type="AGR" id="SGD:S000004813"/>
<dbReference type="SGD" id="S000004813">
    <property type="gene designation" value="ROT1"/>
</dbReference>
<dbReference type="VEuPathDB" id="FungiDB:YMR200W"/>
<dbReference type="eggNOG" id="ENOG502QQTG">
    <property type="taxonomic scope" value="Eukaryota"/>
</dbReference>
<dbReference type="HOGENOM" id="CLU_071622_0_0_1"/>
<dbReference type="InParanoid" id="Q03691"/>
<dbReference type="OMA" id="YKPPQML"/>
<dbReference type="OrthoDB" id="5327821at2759"/>
<dbReference type="BioCyc" id="YEAST:G3O-32887-MONOMER"/>
<dbReference type="BioGRID-ORCS" id="855240">
    <property type="hits" value="6 hits in 10 CRISPR screens"/>
</dbReference>
<dbReference type="PRO" id="PR:Q03691"/>
<dbReference type="Proteomes" id="UP000002311">
    <property type="component" value="Chromosome XIII"/>
</dbReference>
<dbReference type="RNAct" id="Q03691">
    <property type="molecule type" value="protein"/>
</dbReference>
<dbReference type="GO" id="GO:0005783">
    <property type="term" value="C:endoplasmic reticulum"/>
    <property type="evidence" value="ECO:0007005"/>
    <property type="project" value="SGD"/>
</dbReference>
<dbReference type="GO" id="GO:0005789">
    <property type="term" value="C:endoplasmic reticulum membrane"/>
    <property type="evidence" value="ECO:0000314"/>
    <property type="project" value="SGD"/>
</dbReference>
<dbReference type="GO" id="GO:0051082">
    <property type="term" value="F:unfolded protein binding"/>
    <property type="evidence" value="ECO:0000314"/>
    <property type="project" value="SGD"/>
</dbReference>
<dbReference type="GO" id="GO:0006458">
    <property type="term" value="P:'de novo' protein folding"/>
    <property type="evidence" value="ECO:0000315"/>
    <property type="project" value="SGD"/>
</dbReference>
<dbReference type="GO" id="GO:0007118">
    <property type="term" value="P:budding cell apical bud growth"/>
    <property type="evidence" value="ECO:0000315"/>
    <property type="project" value="SGD"/>
</dbReference>
<dbReference type="GO" id="GO:0030950">
    <property type="term" value="P:establishment or maintenance of actin cytoskeleton polarity"/>
    <property type="evidence" value="ECO:0000315"/>
    <property type="project" value="SGD"/>
</dbReference>
<dbReference type="GO" id="GO:0009272">
    <property type="term" value="P:fungal-type cell wall biogenesis"/>
    <property type="evidence" value="ECO:0000315"/>
    <property type="project" value="SGD"/>
</dbReference>
<dbReference type="GO" id="GO:0006457">
    <property type="term" value="P:protein folding"/>
    <property type="evidence" value="ECO:0000316"/>
    <property type="project" value="SGD"/>
</dbReference>
<dbReference type="GO" id="GO:0034975">
    <property type="term" value="P:protein folding in endoplasmic reticulum"/>
    <property type="evidence" value="ECO:0000316"/>
    <property type="project" value="SGD"/>
</dbReference>
<dbReference type="GO" id="GO:0006487">
    <property type="term" value="P:protein N-linked glycosylation"/>
    <property type="evidence" value="ECO:0000316"/>
    <property type="project" value="SGD"/>
</dbReference>
<dbReference type="GO" id="GO:0035269">
    <property type="term" value="P:protein O-linked mannosylation"/>
    <property type="evidence" value="ECO:0000316"/>
    <property type="project" value="SGD"/>
</dbReference>
<dbReference type="InterPro" id="IPR019623">
    <property type="entry name" value="Rot1"/>
</dbReference>
<dbReference type="PANTHER" id="PTHR28090">
    <property type="entry name" value="PROTEIN ROT1"/>
    <property type="match status" value="1"/>
</dbReference>
<dbReference type="PANTHER" id="PTHR28090:SF1">
    <property type="entry name" value="PROTEIN ROT1"/>
    <property type="match status" value="1"/>
</dbReference>
<dbReference type="Pfam" id="PF10681">
    <property type="entry name" value="Rot1"/>
    <property type="match status" value="1"/>
</dbReference>
<dbReference type="PIRSF" id="PIRSF017290">
    <property type="entry name" value="ROT1_prd"/>
    <property type="match status" value="1"/>
</dbReference>
<proteinExistence type="evidence at protein level"/>
<accession>Q03691</accession>
<accession>D6W025</accession>
<name>ROT1_YEAST</name>